<proteinExistence type="inferred from homology"/>
<comment type="subunit">
    <text evidence="1">Homodimer.</text>
</comment>
<comment type="similarity">
    <text evidence="1">Belongs to the UPF0210 family.</text>
</comment>
<reference key="1">
    <citation type="journal article" date="2002" name="Proc. Natl. Acad. Sci. U.S.A.">
        <title>Complete genome sequence of Clostridium perfringens, an anaerobic flesh-eater.</title>
        <authorList>
            <person name="Shimizu T."/>
            <person name="Ohtani K."/>
            <person name="Hirakawa H."/>
            <person name="Ohshima K."/>
            <person name="Yamashita A."/>
            <person name="Shiba T."/>
            <person name="Ogasawara N."/>
            <person name="Hattori M."/>
            <person name="Kuhara S."/>
            <person name="Hayashi H."/>
        </authorList>
    </citation>
    <scope>NUCLEOTIDE SEQUENCE [LARGE SCALE GENOMIC DNA]</scope>
    <source>
        <strain>13 / Type A</strain>
    </source>
</reference>
<dbReference type="EMBL" id="BA000016">
    <property type="protein sequence ID" value="BAB81203.1"/>
    <property type="molecule type" value="Genomic_DNA"/>
</dbReference>
<dbReference type="RefSeq" id="WP_011010474.1">
    <property type="nucleotide sequence ID" value="NC_003366.1"/>
</dbReference>
<dbReference type="SMR" id="Q8XKA3"/>
<dbReference type="STRING" id="195102.gene:10490761"/>
<dbReference type="KEGG" id="cpe:CPE1497"/>
<dbReference type="HOGENOM" id="CLU_048704_0_0_9"/>
<dbReference type="Proteomes" id="UP000000818">
    <property type="component" value="Chromosome"/>
</dbReference>
<dbReference type="CDD" id="cd08025">
    <property type="entry name" value="RNR_PFL_like_DUF711"/>
    <property type="match status" value="1"/>
</dbReference>
<dbReference type="Gene3D" id="3.20.70.20">
    <property type="match status" value="1"/>
</dbReference>
<dbReference type="HAMAP" id="MF_01221">
    <property type="entry name" value="UPF0210"/>
    <property type="match status" value="1"/>
</dbReference>
<dbReference type="InterPro" id="IPR007841">
    <property type="entry name" value="UPF0210"/>
</dbReference>
<dbReference type="NCBIfam" id="NF003700">
    <property type="entry name" value="PRK05313.1"/>
    <property type="match status" value="1"/>
</dbReference>
<dbReference type="PANTHER" id="PTHR37560:SF1">
    <property type="entry name" value="UPF0210 PROTEIN MJ1665"/>
    <property type="match status" value="1"/>
</dbReference>
<dbReference type="PANTHER" id="PTHR37560">
    <property type="entry name" value="UPF0210 PROTEIN SPR0218"/>
    <property type="match status" value="1"/>
</dbReference>
<dbReference type="Pfam" id="PF05167">
    <property type="entry name" value="DUF711"/>
    <property type="match status" value="1"/>
</dbReference>
<dbReference type="SUPFAM" id="SSF51998">
    <property type="entry name" value="PFL-like glycyl radical enzymes"/>
    <property type="match status" value="1"/>
</dbReference>
<gene>
    <name type="ordered locus">CPE1497</name>
</gene>
<feature type="chain" id="PRO_0000070553" description="UPF0210 protein CPE1497">
    <location>
        <begin position="1"/>
        <end position="450"/>
    </location>
</feature>
<keyword id="KW-1185">Reference proteome</keyword>
<sequence>MLKNNEILETISMIKEQNLDVRTITLGLSLMDCACEDVKVLSEKIYDKITKTAENLVKTGENIEKRFGIPIINKRISVTPISIVAASCNCNSYLSIAKAMDKAAKEVGVDFIGGFSALVHKGFTESDLKLIKSLPESLANTDIVCSSVNIGSTRYGINMDAVKLMGETIKETSLITPDGFGCAKLVVFCNAVEDNPFMAGAFHGVGEAEKVINVGVSGPGVVKKALEEVRGKSFEEVAETIKKTSFKVTRMGQLVAKEASKLMDIPFGIVDLSLAPTPAVGDSVGRVLEEMGLSNCGTHGTTAALALLNDAVKKGGLMASSYVGGLSGAFIPVSEDECMIEQSKNGFLTIEKLEAMTCVCSVGLDMIAIPGKTSASTISGIIADEAAIGMINNKTTAVRIIPVPNKDIGDIVEFGGLLGSAPIMRVSPGNCDDFISRGGRIPAPVHSLKN</sequence>
<name>Y1497_CLOPE</name>
<accession>Q8XKA3</accession>
<protein>
    <recommendedName>
        <fullName evidence="1">UPF0210 protein CPE1497</fullName>
    </recommendedName>
</protein>
<organism>
    <name type="scientific">Clostridium perfringens (strain 13 / Type A)</name>
    <dbReference type="NCBI Taxonomy" id="195102"/>
    <lineage>
        <taxon>Bacteria</taxon>
        <taxon>Bacillati</taxon>
        <taxon>Bacillota</taxon>
        <taxon>Clostridia</taxon>
        <taxon>Eubacteriales</taxon>
        <taxon>Clostridiaceae</taxon>
        <taxon>Clostridium</taxon>
    </lineage>
</organism>
<evidence type="ECO:0000255" key="1">
    <source>
        <dbReference type="HAMAP-Rule" id="MF_01221"/>
    </source>
</evidence>